<comment type="function">
    <text evidence="1 4 5 6">Water channel required to facilitate the transport of water across membranes. Involved in sporulation, freeze tolerance and osmotolerance (By similarity). Is non-functional in most laboratory strains.</text>
</comment>
<comment type="subcellular location">
    <subcellularLocation>
        <location evidence="1">Endoplasmic reticulum membrane</location>
        <topology>Multi-pass membrane protein</topology>
    </subcellularLocation>
    <subcellularLocation>
        <location evidence="1">Cell membrane</location>
        <topology>Multi-pass membrane protein</topology>
    </subcellularLocation>
</comment>
<comment type="developmental stage">
    <text>Expressed in spores.</text>
</comment>
<comment type="domain">
    <text>Aquaporins contain two tandem repeats each containing three membrane-spanning domains and a pore-forming loop with the signature motif Asn-Pro-Ala (NPA).</text>
</comment>
<comment type="polymorphism">
    <text>In strain S288c and many other laboratory strains, a natural frameshift in position 294 results in a shortened C-terminus when compared to wild-type alleles. It is however not the different C-terminus, but rather 2 polymorphisms at positions 121 and 255 that lead to loss of water transport activity.</text>
</comment>
<comment type="similarity">
    <text evidence="7">Belongs to the MIP/aquaporin (TC 1.A.8) family.</text>
</comment>
<dbReference type="EMBL" id="U25841">
    <property type="protein sequence ID" value="AAB64621.1"/>
    <property type="molecule type" value="Genomic_DNA"/>
</dbReference>
<dbReference type="EMBL" id="AY558066">
    <property type="protein sequence ID" value="AAS56392.1"/>
    <property type="molecule type" value="Genomic_DNA"/>
</dbReference>
<dbReference type="EMBL" id="BK006949">
    <property type="protein sequence ID" value="DAA11608.1"/>
    <property type="molecule type" value="Genomic_DNA"/>
</dbReference>
<dbReference type="PIR" id="S58822">
    <property type="entry name" value="S58822"/>
</dbReference>
<dbReference type="RefSeq" id="NP_015518.1">
    <property type="nucleotide sequence ID" value="NM_001184289.1"/>
</dbReference>
<dbReference type="SMR" id="P0CD91"/>
<dbReference type="BioGRID" id="36364">
    <property type="interactions" value="37"/>
</dbReference>
<dbReference type="FunCoup" id="P0CD91">
    <property type="interactions" value="360"/>
</dbReference>
<dbReference type="STRING" id="4932.YPR192W"/>
<dbReference type="iPTMnet" id="P0CD91"/>
<dbReference type="PaxDb" id="4932-YPR192W"/>
<dbReference type="DNASU" id="856322"/>
<dbReference type="EnsemblFungi" id="YPR192W_mRNA">
    <property type="protein sequence ID" value="YPR192W"/>
    <property type="gene ID" value="YPR192W"/>
</dbReference>
<dbReference type="GeneID" id="856322"/>
<dbReference type="KEGG" id="sce:YPR192W"/>
<dbReference type="AGR" id="SGD:S000006396"/>
<dbReference type="SGD" id="S000006396">
    <property type="gene designation" value="AQY1"/>
</dbReference>
<dbReference type="VEuPathDB" id="FungiDB:YPR192W"/>
<dbReference type="eggNOG" id="KOG0223">
    <property type="taxonomic scope" value="Eukaryota"/>
</dbReference>
<dbReference type="GeneTree" id="ENSGT00940000176123"/>
<dbReference type="HOGENOM" id="CLU_020019_1_4_1"/>
<dbReference type="InParanoid" id="P0CD91"/>
<dbReference type="OMA" id="LALNTMH"/>
<dbReference type="OrthoDB" id="3222at2759"/>
<dbReference type="BioCyc" id="YEAST:G3O-34314-MONOMER"/>
<dbReference type="BioGRID-ORCS" id="856322">
    <property type="hits" value="4 hits in 10 CRISPR screens"/>
</dbReference>
<dbReference type="PRO" id="PR:P0CD91"/>
<dbReference type="Proteomes" id="UP000002311">
    <property type="component" value="Chromosome XVI"/>
</dbReference>
<dbReference type="RNAct" id="P0CD91">
    <property type="molecule type" value="protein"/>
</dbReference>
<dbReference type="GO" id="GO:0005783">
    <property type="term" value="C:endoplasmic reticulum"/>
    <property type="evidence" value="ECO:0007005"/>
    <property type="project" value="SGD"/>
</dbReference>
<dbReference type="GO" id="GO:0005789">
    <property type="term" value="C:endoplasmic reticulum membrane"/>
    <property type="evidence" value="ECO:0007669"/>
    <property type="project" value="UniProtKB-SubCell"/>
</dbReference>
<dbReference type="GO" id="GO:0005886">
    <property type="term" value="C:plasma membrane"/>
    <property type="evidence" value="ECO:0000314"/>
    <property type="project" value="SGD"/>
</dbReference>
<dbReference type="GO" id="GO:0015250">
    <property type="term" value="F:water channel activity"/>
    <property type="evidence" value="ECO:0000315"/>
    <property type="project" value="SGD"/>
</dbReference>
<dbReference type="GO" id="GO:0030437">
    <property type="term" value="P:ascospore formation"/>
    <property type="evidence" value="ECO:0000315"/>
    <property type="project" value="SGD"/>
</dbReference>
<dbReference type="GO" id="GO:0055085">
    <property type="term" value="P:transmembrane transport"/>
    <property type="evidence" value="ECO:0000314"/>
    <property type="project" value="SGD"/>
</dbReference>
<dbReference type="GO" id="GO:0006833">
    <property type="term" value="P:water transport"/>
    <property type="evidence" value="ECO:0000315"/>
    <property type="project" value="SGD"/>
</dbReference>
<dbReference type="FunFam" id="1.20.1080.10:FF:000014">
    <property type="entry name" value="Aquaporin 1"/>
    <property type="match status" value="1"/>
</dbReference>
<dbReference type="Gene3D" id="1.20.1080.10">
    <property type="entry name" value="Glycerol uptake facilitator protein"/>
    <property type="match status" value="1"/>
</dbReference>
<dbReference type="InterPro" id="IPR023271">
    <property type="entry name" value="Aquaporin-like"/>
</dbReference>
<dbReference type="InterPro" id="IPR034294">
    <property type="entry name" value="Aquaporin_transptr"/>
</dbReference>
<dbReference type="InterPro" id="IPR000425">
    <property type="entry name" value="MIP"/>
</dbReference>
<dbReference type="InterPro" id="IPR022357">
    <property type="entry name" value="MIP_CS"/>
</dbReference>
<dbReference type="NCBIfam" id="TIGR00861">
    <property type="entry name" value="MIP"/>
    <property type="match status" value="1"/>
</dbReference>
<dbReference type="PANTHER" id="PTHR19139">
    <property type="entry name" value="AQUAPORIN TRANSPORTER"/>
    <property type="match status" value="1"/>
</dbReference>
<dbReference type="PANTHER" id="PTHR19139:SF199">
    <property type="entry name" value="MIP17260P"/>
    <property type="match status" value="1"/>
</dbReference>
<dbReference type="Pfam" id="PF00230">
    <property type="entry name" value="MIP"/>
    <property type="match status" value="1"/>
</dbReference>
<dbReference type="PRINTS" id="PR00783">
    <property type="entry name" value="MINTRINSICP"/>
</dbReference>
<dbReference type="SUPFAM" id="SSF81338">
    <property type="entry name" value="Aquaporin-like"/>
    <property type="match status" value="1"/>
</dbReference>
<dbReference type="PROSITE" id="PS00221">
    <property type="entry name" value="MIP"/>
    <property type="match status" value="1"/>
</dbReference>
<feature type="chain" id="PRO_0000064076" description="Aquaporin-1">
    <location>
        <begin position="1"/>
        <end position="305"/>
    </location>
</feature>
<feature type="topological domain" description="Cytoplasmic" evidence="2">
    <location>
        <begin position="1"/>
        <end position="48"/>
    </location>
</feature>
<feature type="transmembrane region" description="Helical; Name=1" evidence="2">
    <location>
        <begin position="49"/>
        <end position="69"/>
    </location>
</feature>
<feature type="topological domain" description="Extracellular" evidence="2">
    <location>
        <begin position="70"/>
        <end position="91"/>
    </location>
</feature>
<feature type="transmembrane region" description="Helical; Name=2" evidence="2">
    <location>
        <begin position="92"/>
        <end position="112"/>
    </location>
</feature>
<feature type="topological domain" description="Cytoplasmic" evidence="2">
    <location>
        <begin position="113"/>
        <end position="136"/>
    </location>
</feature>
<feature type="transmembrane region" description="Helical; Name=3" evidence="2">
    <location>
        <begin position="137"/>
        <end position="157"/>
    </location>
</feature>
<feature type="topological domain" description="Extracellular" evidence="2">
    <location>
        <begin position="158"/>
        <end position="176"/>
    </location>
</feature>
<feature type="transmembrane region" description="Helical; Name=4" evidence="2">
    <location>
        <begin position="177"/>
        <end position="197"/>
    </location>
</feature>
<feature type="topological domain" description="Cytoplasmic" evidence="2">
    <location>
        <begin position="198"/>
        <end position="203"/>
    </location>
</feature>
<feature type="transmembrane region" description="Helical; Name=5" evidence="2">
    <location>
        <begin position="204"/>
        <end position="224"/>
    </location>
</feature>
<feature type="topological domain" description="Extracellular" evidence="2">
    <location>
        <begin position="225"/>
        <end position="248"/>
    </location>
</feature>
<feature type="transmembrane region" description="Helical; Name=6" evidence="2">
    <location>
        <begin position="249"/>
        <end position="269"/>
    </location>
</feature>
<feature type="topological domain" description="Cytoplasmic" evidence="2">
    <location>
        <begin position="270"/>
        <end position="305"/>
    </location>
</feature>
<feature type="region of interest" description="Disordered" evidence="3">
    <location>
        <begin position="1"/>
        <end position="34"/>
    </location>
</feature>
<feature type="region of interest" description="Disordered" evidence="3">
    <location>
        <begin position="286"/>
        <end position="305"/>
    </location>
</feature>
<feature type="short sequence motif" description="NPA 1">
    <location>
        <begin position="118"/>
        <end position="120"/>
    </location>
</feature>
<feature type="short sequence motif" description="NPA 2">
    <location>
        <begin position="230"/>
        <end position="232"/>
    </location>
</feature>
<feature type="compositionally biased region" description="Basic and acidic residues" evidence="3">
    <location>
        <begin position="286"/>
        <end position="295"/>
    </location>
</feature>
<feature type="compositionally biased region" description="Polar residues" evidence="3">
    <location>
        <begin position="296"/>
        <end position="305"/>
    </location>
</feature>
<feature type="mutagenesis site" description="Restores water permeability; when associated with P-255." evidence="6">
    <original>M</original>
    <variation>V</variation>
    <location>
        <position position="121"/>
    </location>
</feature>
<feature type="mutagenesis site" description="Restores water permeability; when associated with V-121." evidence="6">
    <original>T</original>
    <variation>P</variation>
    <location>
        <position position="255"/>
    </location>
</feature>
<keyword id="KW-1003">Cell membrane</keyword>
<keyword id="KW-0256">Endoplasmic reticulum</keyword>
<keyword id="KW-0472">Membrane</keyword>
<keyword id="KW-1185">Reference proteome</keyword>
<keyword id="KW-0677">Repeat</keyword>
<keyword id="KW-0812">Transmembrane</keyword>
<keyword id="KW-1133">Transmembrane helix</keyword>
<keyword id="KW-0813">Transport</keyword>
<organism>
    <name type="scientific">Saccharomyces cerevisiae (strain ATCC 204508 / S288c)</name>
    <name type="common">Baker's yeast</name>
    <dbReference type="NCBI Taxonomy" id="559292"/>
    <lineage>
        <taxon>Eukaryota</taxon>
        <taxon>Fungi</taxon>
        <taxon>Dikarya</taxon>
        <taxon>Ascomycota</taxon>
        <taxon>Saccharomycotina</taxon>
        <taxon>Saccharomycetes</taxon>
        <taxon>Saccharomycetales</taxon>
        <taxon>Saccharomycetaceae</taxon>
        <taxon>Saccharomyces</taxon>
    </lineage>
</organism>
<evidence type="ECO:0000250" key="1"/>
<evidence type="ECO:0000255" key="2"/>
<evidence type="ECO:0000256" key="3">
    <source>
        <dbReference type="SAM" id="MobiDB-lite"/>
    </source>
</evidence>
<evidence type="ECO:0000269" key="4">
    <source>
    </source>
</evidence>
<evidence type="ECO:0000269" key="5">
    <source>
    </source>
</evidence>
<evidence type="ECO:0000269" key="6">
    <source>
    </source>
</evidence>
<evidence type="ECO:0000305" key="7"/>
<gene>
    <name type="primary">AQY1</name>
    <name type="synonym">AQY1-2</name>
    <name type="ordered locus">YPR192W</name>
    <name type="ORF">P9677.5</name>
</gene>
<sequence>MSSNDSNDTDKQHTRLDPTGVDDAYIPPEQPETKHHRFKISRDTLRDHFIAAVGEFCGTFMFLWCAYVICNVANHDVALVAAPDGSHPGQLIMIAIGFGFSVMFSIWCFAGVSGGALNPAMSLSLCLARAVSPTRCVVMWVSQIVAGMAAGGAASAMTPGEVLFANSLGLGCSRTRGLFLEMFGTAILCLTVLMTAVEKRETNFMAALPIGISLFIAHVALTAYTGTGVNPARSLGAAVAARYFPHYHWIYWIGTLLGSILAWSVWQLLQILDYTTYVTAEKAASTKEKAQKKGETSSSSAVAEV</sequence>
<proteinExistence type="evidence at protein level"/>
<accession>P0CD91</accession>
<accession>D6W4J2</accession>
<accession>O74680</accession>
<accession>P53386</accession>
<reference key="1">
    <citation type="journal article" date="1997" name="Nature">
        <title>The nucleotide sequence of Saccharomyces cerevisiae chromosome XVI.</title>
        <authorList>
            <person name="Bussey H."/>
            <person name="Storms R.K."/>
            <person name="Ahmed A."/>
            <person name="Albermann K."/>
            <person name="Allen E."/>
            <person name="Ansorge W."/>
            <person name="Araujo R."/>
            <person name="Aparicio A."/>
            <person name="Barrell B.G."/>
            <person name="Badcock K."/>
            <person name="Benes V."/>
            <person name="Botstein D."/>
            <person name="Bowman S."/>
            <person name="Brueckner M."/>
            <person name="Carpenter J."/>
            <person name="Cherry J.M."/>
            <person name="Chung E."/>
            <person name="Churcher C.M."/>
            <person name="Coster F."/>
            <person name="Davis K."/>
            <person name="Davis R.W."/>
            <person name="Dietrich F.S."/>
            <person name="Delius H."/>
            <person name="DiPaolo T."/>
            <person name="Dubois E."/>
            <person name="Duesterhoeft A."/>
            <person name="Duncan M."/>
            <person name="Floeth M."/>
            <person name="Fortin N."/>
            <person name="Friesen J.D."/>
            <person name="Fritz C."/>
            <person name="Goffeau A."/>
            <person name="Hall J."/>
            <person name="Hebling U."/>
            <person name="Heumann K."/>
            <person name="Hilbert H."/>
            <person name="Hillier L.W."/>
            <person name="Hunicke-Smith S."/>
            <person name="Hyman R.W."/>
            <person name="Johnston M."/>
            <person name="Kalman S."/>
            <person name="Kleine K."/>
            <person name="Komp C."/>
            <person name="Kurdi O."/>
            <person name="Lashkari D."/>
            <person name="Lew H."/>
            <person name="Lin A."/>
            <person name="Lin D."/>
            <person name="Louis E.J."/>
            <person name="Marathe R."/>
            <person name="Messenguy F."/>
            <person name="Mewes H.-W."/>
            <person name="Mirtipati S."/>
            <person name="Moestl D."/>
            <person name="Mueller-Auer S."/>
            <person name="Namath A."/>
            <person name="Nentwich U."/>
            <person name="Oefner P."/>
            <person name="Pearson D."/>
            <person name="Petel F.X."/>
            <person name="Pohl T.M."/>
            <person name="Purnelle B."/>
            <person name="Rajandream M.A."/>
            <person name="Rechmann S."/>
            <person name="Rieger M."/>
            <person name="Riles L."/>
            <person name="Roberts D."/>
            <person name="Schaefer M."/>
            <person name="Scharfe M."/>
            <person name="Scherens B."/>
            <person name="Schramm S."/>
            <person name="Schroeder M."/>
            <person name="Sdicu A.-M."/>
            <person name="Tettelin H."/>
            <person name="Urrestarazu L.A."/>
            <person name="Ushinsky S."/>
            <person name="Vierendeels F."/>
            <person name="Vissers S."/>
            <person name="Voss H."/>
            <person name="Walsh S.V."/>
            <person name="Wambutt R."/>
            <person name="Wang Y."/>
            <person name="Wedler E."/>
            <person name="Wedler H."/>
            <person name="Winnett E."/>
            <person name="Zhong W.-W."/>
            <person name="Zollner A."/>
            <person name="Vo D.H."/>
            <person name="Hani J."/>
        </authorList>
    </citation>
    <scope>NUCLEOTIDE SEQUENCE [LARGE SCALE GENOMIC DNA]</scope>
    <source>
        <strain>ATCC 204508 / S288c</strain>
    </source>
</reference>
<reference key="2">
    <citation type="journal article" date="2014" name="G3 (Bethesda)">
        <title>The reference genome sequence of Saccharomyces cerevisiae: Then and now.</title>
        <authorList>
            <person name="Engel S.R."/>
            <person name="Dietrich F.S."/>
            <person name="Fisk D.G."/>
            <person name="Binkley G."/>
            <person name="Balakrishnan R."/>
            <person name="Costanzo M.C."/>
            <person name="Dwight S.S."/>
            <person name="Hitz B.C."/>
            <person name="Karra K."/>
            <person name="Nash R.S."/>
            <person name="Weng S."/>
            <person name="Wong E.D."/>
            <person name="Lloyd P."/>
            <person name="Skrzypek M.S."/>
            <person name="Miyasato S.R."/>
            <person name="Simison M."/>
            <person name="Cherry J.M."/>
        </authorList>
    </citation>
    <scope>GENOME REANNOTATION</scope>
    <source>
        <strain>ATCC 204508 / S288c</strain>
    </source>
</reference>
<reference key="3">
    <citation type="journal article" date="2007" name="Genome Res.">
        <title>Approaching a complete repository of sequence-verified protein-encoding clones for Saccharomyces cerevisiae.</title>
        <authorList>
            <person name="Hu Y."/>
            <person name="Rolfs A."/>
            <person name="Bhullar B."/>
            <person name="Murthy T.V.S."/>
            <person name="Zhu C."/>
            <person name="Berger M.F."/>
            <person name="Camargo A.A."/>
            <person name="Kelley F."/>
            <person name="McCarron S."/>
            <person name="Jepson D."/>
            <person name="Richardson A."/>
            <person name="Raphael J."/>
            <person name="Moreira D."/>
            <person name="Taycher E."/>
            <person name="Zuo D."/>
            <person name="Mohr S."/>
            <person name="Kane M.F."/>
            <person name="Williamson J."/>
            <person name="Simpson A.J.G."/>
            <person name="Bulyk M.L."/>
            <person name="Harlow E."/>
            <person name="Marsischky G."/>
            <person name="Kolodner R.D."/>
            <person name="LaBaer J."/>
        </authorList>
    </citation>
    <scope>NUCLEOTIDE SEQUENCE [GENOMIC DNA]</scope>
    <source>
        <strain>ATCC 204508 / S288c</strain>
    </source>
</reference>
<reference key="4">
    <citation type="journal article" date="1998" name="J. Biol. Chem.">
        <title>Aquaporins in Saccharomyces. Genetic and functional distinctions between laboratory and wild-type strains.</title>
        <authorList>
            <person name="Bonhivers M."/>
            <person name="Carbrey J.M."/>
            <person name="Gould S.J."/>
            <person name="Agre P."/>
        </authorList>
    </citation>
    <scope>FUNCTION</scope>
    <scope>MUTAGENESIS OF MET-121 AND THR-255</scope>
</reference>
<reference key="5">
    <citation type="journal article" date="1999" name="Biochem. Biophys. Res. Commun.">
        <title>Molecular and functional study of AQY1 from Saccharomyces cerevisiae: role of the C-terminal domain.</title>
        <authorList>
            <person name="Laize V."/>
            <person name="Gobin R."/>
            <person name="Rousselet G."/>
            <person name="Badier C."/>
            <person name="Hohmann S."/>
            <person name="Ripoche P."/>
            <person name="Tacnet F."/>
        </authorList>
    </citation>
    <scope>FUNCTION</scope>
</reference>
<reference key="6">
    <citation type="journal article" date="2000" name="Yeast">
        <title>Polymorphism of Saccharomyces cerevisiae aquaporins.</title>
        <authorList>
            <person name="Laize V."/>
            <person name="Tacnet F."/>
            <person name="Ripoche P."/>
            <person name="Hohmann S."/>
        </authorList>
    </citation>
    <scope>FUNCTION</scope>
</reference>
<reference key="7">
    <citation type="journal article" date="2003" name="J. Biol. Chem.">
        <title>Topology models for 37 Saccharomyces cerevisiae membrane proteins based on C-terminal reporter fusions and predictions.</title>
        <authorList>
            <person name="Kim H."/>
            <person name="Melen K."/>
            <person name="von Heijne G."/>
        </authorList>
    </citation>
    <scope>TOPOLOGY</scope>
</reference>
<reference key="8">
    <citation type="journal article" date="2006" name="Proc. Natl. Acad. Sci. U.S.A.">
        <title>A global topology map of the Saccharomyces cerevisiae membrane proteome.</title>
        <authorList>
            <person name="Kim H."/>
            <person name="Melen K."/>
            <person name="Oesterberg M."/>
            <person name="von Heijne G."/>
        </authorList>
    </citation>
    <scope>TOPOLOGY [LARGE SCALE ANALYSIS]</scope>
    <source>
        <strain>ATCC 208353 / W303-1A</strain>
    </source>
</reference>
<protein>
    <recommendedName>
        <fullName>Aquaporin-1</fullName>
    </recommendedName>
</protein>
<name>AQY1_YEAST</name>